<protein>
    <recommendedName>
        <fullName>Cytochrome c oxidase subunit 3</fullName>
        <ecNumber>7.1.1.9</ecNumber>
    </recommendedName>
    <alternativeName>
        <fullName>Cytochrome c oxidase polypeptide III</fullName>
    </alternativeName>
</protein>
<feature type="chain" id="PRO_0000183850" description="Cytochrome c oxidase subunit 3">
    <location>
        <begin position="1"/>
        <end position="268"/>
    </location>
</feature>
<feature type="transmembrane region" description="Helical" evidence="2">
    <location>
        <begin position="19"/>
        <end position="39"/>
    </location>
</feature>
<feature type="transmembrane region" description="Helical" evidence="2">
    <location>
        <begin position="49"/>
        <end position="69"/>
    </location>
</feature>
<feature type="transmembrane region" description="Helical" evidence="2">
    <location>
        <begin position="85"/>
        <end position="105"/>
    </location>
</feature>
<feature type="transmembrane region" description="Helical" evidence="2">
    <location>
        <begin position="124"/>
        <end position="144"/>
    </location>
</feature>
<feature type="transmembrane region" description="Helical" evidence="2">
    <location>
        <begin position="165"/>
        <end position="185"/>
    </location>
</feature>
<feature type="transmembrane region" description="Helical" evidence="2">
    <location>
        <begin position="202"/>
        <end position="222"/>
    </location>
</feature>
<feature type="transmembrane region" description="Helical" evidence="2">
    <location>
        <begin position="245"/>
        <end position="265"/>
    </location>
</feature>
<gene>
    <name type="primary">COIII</name>
</gene>
<accession>P14058</accession>
<dbReference type="EC" id="7.1.1.9"/>
<dbReference type="EMBL" id="M36270">
    <property type="protein sequence ID" value="AAA32065.2"/>
    <property type="molecule type" value="Genomic_DNA"/>
</dbReference>
<dbReference type="PIR" id="S07557">
    <property type="entry name" value="S07557"/>
</dbReference>
<dbReference type="SMR" id="P14058"/>
<dbReference type="GO" id="GO:0005743">
    <property type="term" value="C:mitochondrial inner membrane"/>
    <property type="evidence" value="ECO:0007669"/>
    <property type="project" value="UniProtKB-SubCell"/>
</dbReference>
<dbReference type="GO" id="GO:0004129">
    <property type="term" value="F:cytochrome-c oxidase activity"/>
    <property type="evidence" value="ECO:0007669"/>
    <property type="project" value="UniProtKB-EC"/>
</dbReference>
<dbReference type="GO" id="GO:0006123">
    <property type="term" value="P:mitochondrial electron transport, cytochrome c to oxygen"/>
    <property type="evidence" value="ECO:0007669"/>
    <property type="project" value="TreeGrafter"/>
</dbReference>
<dbReference type="CDD" id="cd01665">
    <property type="entry name" value="Cyt_c_Oxidase_III"/>
    <property type="match status" value="1"/>
</dbReference>
<dbReference type="Gene3D" id="1.10.287.70">
    <property type="match status" value="1"/>
</dbReference>
<dbReference type="Gene3D" id="1.20.120.80">
    <property type="entry name" value="Cytochrome c oxidase, subunit III, four-helix bundle"/>
    <property type="match status" value="1"/>
</dbReference>
<dbReference type="InterPro" id="IPR024791">
    <property type="entry name" value="Cyt_c/ubiquinol_Oxase_su3"/>
</dbReference>
<dbReference type="InterPro" id="IPR033945">
    <property type="entry name" value="Cyt_c_oxase_su3_dom"/>
</dbReference>
<dbReference type="InterPro" id="IPR000298">
    <property type="entry name" value="Cyt_c_oxidase-like_su3"/>
</dbReference>
<dbReference type="InterPro" id="IPR035973">
    <property type="entry name" value="Cyt_c_oxidase_su3-like_sf"/>
</dbReference>
<dbReference type="InterPro" id="IPR013833">
    <property type="entry name" value="Cyt_c_oxidase_su3_a-hlx"/>
</dbReference>
<dbReference type="PANTHER" id="PTHR11403:SF7">
    <property type="entry name" value="CYTOCHROME C OXIDASE SUBUNIT 3"/>
    <property type="match status" value="1"/>
</dbReference>
<dbReference type="PANTHER" id="PTHR11403">
    <property type="entry name" value="CYTOCHROME C OXIDASE SUBUNIT III"/>
    <property type="match status" value="1"/>
</dbReference>
<dbReference type="Pfam" id="PF00510">
    <property type="entry name" value="COX3"/>
    <property type="match status" value="1"/>
</dbReference>
<dbReference type="SUPFAM" id="SSF81452">
    <property type="entry name" value="Cytochrome c oxidase subunit III-like"/>
    <property type="match status" value="1"/>
</dbReference>
<dbReference type="PROSITE" id="PS50253">
    <property type="entry name" value="COX3"/>
    <property type="match status" value="1"/>
</dbReference>
<geneLocation type="mitochondrion"/>
<sequence length="268" mass="29922">MTSIKFYQSFSAHLVQHSPWPILVSFSLFNLAIGTVLTMHGYSHSSTTFDLGLAVTVGSILLWTRDIVIEGSFLGDHTKQVQEGLIIGFILFIISEVFAFISVFWAYFHSALSPAVELGSTWPPVGIIPLDTFSLPLFNTIILLSSGAFVTYGHHAIFSGKRLDSIIGLFLTVALALIFSYFQAFEYIHAGFSMSDSVFGTVFFASTGLHGIHVMLGTLFLFVSFLRQVNYQTTKEHNIGLETSILYWHFVDLVWLFLFLVVYFWGGA</sequence>
<name>COX3_SCHCO</name>
<reference key="1">
    <citation type="journal article" date="1988" name="Curr. Genet.">
        <title>Nucleotide base sequence of the mitochondrial COIII gene of Schizophyllum commune.</title>
        <authorList>
            <person name="Phelps L.G."/>
            <person name="Burke J.M."/>
            <person name="Ullrich R.C."/>
            <person name="Novotny C.P."/>
        </authorList>
    </citation>
    <scope>NUCLEOTIDE SEQUENCE [GENOMIC DNA]</scope>
</reference>
<comment type="function">
    <text evidence="1">Component of the cytochrome c oxidase, the last enzyme in the mitochondrial electron transport chain which drives oxidative phosphorylation. The respiratory chain contains 3 multisubunit complexes succinate dehydrogenase (complex II, CII), ubiquinol-cytochrome c oxidoreductase (cytochrome b-c1 complex, complex III, CIII) and cytochrome c oxidase (complex IV, CIV), that cooperate to transfer electrons derived from NADH and succinate to molecular oxygen, creating an electrochemical gradient over the inner membrane that drives transmembrane transport and the ATP synthase. Cytochrome c oxidase is the component of the respiratory chain that catalyzes the reduction of oxygen to water. Electrons originating from reduced cytochrome c in the intermembrane space (IMS) are transferred via the dinuclear copper A center (CU(A)) of subunit 2 and heme A of subunit 1 to the active site in subunit 1, a binuclear center (BNC) formed by heme A3 and copper B (CU(B)). The BNC reduces molecular oxygen to 2 water molecules using 4 electrons from cytochrome c in the IMS and 4 protons from the mitochondrial matrix.</text>
</comment>
<comment type="catalytic activity">
    <reaction evidence="1">
        <text>4 Fe(II)-[cytochrome c] + O2 + 8 H(+)(in) = 4 Fe(III)-[cytochrome c] + 2 H2O + 4 H(+)(out)</text>
        <dbReference type="Rhea" id="RHEA:11436"/>
        <dbReference type="Rhea" id="RHEA-COMP:10350"/>
        <dbReference type="Rhea" id="RHEA-COMP:14399"/>
        <dbReference type="ChEBI" id="CHEBI:15377"/>
        <dbReference type="ChEBI" id="CHEBI:15378"/>
        <dbReference type="ChEBI" id="CHEBI:15379"/>
        <dbReference type="ChEBI" id="CHEBI:29033"/>
        <dbReference type="ChEBI" id="CHEBI:29034"/>
        <dbReference type="EC" id="7.1.1.9"/>
    </reaction>
    <physiologicalReaction direction="left-to-right" evidence="1">
        <dbReference type="Rhea" id="RHEA:11437"/>
    </physiologicalReaction>
</comment>
<comment type="subunit">
    <text evidence="1">Component of the cytochrome c oxidase (complex IV, CIV), a multisubunit enzyme composed of a catalytic core of 3 subunits and several supernumerary subunits. The complex exists as a monomer or a dimer and forms supercomplexes (SCs) in the inner mitochondrial membrane with ubiquinol-cytochrome c oxidoreductase (cytochrome b-c1 complex, complex III, CIII).</text>
</comment>
<comment type="subcellular location">
    <subcellularLocation>
        <location evidence="1">Mitochondrion inner membrane</location>
        <topology evidence="1">Multi-pass membrane protein</topology>
    </subcellularLocation>
</comment>
<comment type="similarity">
    <text evidence="3">Belongs to the cytochrome c oxidase subunit 3 family.</text>
</comment>
<keyword id="KW-0472">Membrane</keyword>
<keyword id="KW-0496">Mitochondrion</keyword>
<keyword id="KW-0999">Mitochondrion inner membrane</keyword>
<keyword id="KW-1278">Translocase</keyword>
<keyword id="KW-0812">Transmembrane</keyword>
<keyword id="KW-1133">Transmembrane helix</keyword>
<evidence type="ECO:0000250" key="1">
    <source>
        <dbReference type="UniProtKB" id="P00420"/>
    </source>
</evidence>
<evidence type="ECO:0000255" key="2"/>
<evidence type="ECO:0000305" key="3"/>
<organism>
    <name type="scientific">Schizophyllum commune</name>
    <name type="common">Split gill fungus</name>
    <dbReference type="NCBI Taxonomy" id="5334"/>
    <lineage>
        <taxon>Eukaryota</taxon>
        <taxon>Fungi</taxon>
        <taxon>Dikarya</taxon>
        <taxon>Basidiomycota</taxon>
        <taxon>Agaricomycotina</taxon>
        <taxon>Agaricomycetes</taxon>
        <taxon>Agaricomycetidae</taxon>
        <taxon>Agaricales</taxon>
        <taxon>Schizophyllaceae</taxon>
        <taxon>Schizophyllum</taxon>
    </lineage>
</organism>
<proteinExistence type="inferred from homology"/>